<feature type="signal peptide" evidence="3">
    <location>
        <begin position="1"/>
        <end position="23"/>
    </location>
</feature>
<feature type="chain" id="PRO_0000002929" description="Laccase-1">
    <location>
        <begin position="24"/>
        <end position="529"/>
    </location>
</feature>
<feature type="domain" description="Plastocyanin-like 1">
    <location>
        <begin position="25"/>
        <end position="159"/>
    </location>
</feature>
<feature type="domain" description="Plastocyanin-like 2">
    <location>
        <begin position="170"/>
        <end position="312"/>
    </location>
</feature>
<feature type="domain" description="Plastocyanin-like 3">
    <location>
        <begin position="380"/>
        <end position="499"/>
    </location>
</feature>
<feature type="binding site" description="type 2 copper site" evidence="1">
    <location>
        <position position="96"/>
    </location>
    <ligand>
        <name>Cu cation</name>
        <dbReference type="ChEBI" id="CHEBI:23378"/>
        <label>1</label>
    </ligand>
</feature>
<feature type="binding site" description="type 3 copper site" evidence="1">
    <location>
        <position position="98"/>
    </location>
    <ligand>
        <name>Cu cation</name>
        <dbReference type="ChEBI" id="CHEBI:23378"/>
        <label>2</label>
    </ligand>
</feature>
<feature type="binding site" description="type 3 copper site" evidence="1">
    <location>
        <position position="141"/>
    </location>
    <ligand>
        <name>Cu cation</name>
        <dbReference type="ChEBI" id="CHEBI:23378"/>
        <label>2</label>
    </ligand>
</feature>
<feature type="binding site" description="type 3 copper site" evidence="1">
    <location>
        <position position="143"/>
    </location>
    <ligand>
        <name>Cu cation</name>
        <dbReference type="ChEBI" id="CHEBI:23378"/>
        <label>3</label>
    </ligand>
</feature>
<feature type="binding site" description="type 1 copper site" evidence="1">
    <location>
        <position position="425"/>
    </location>
    <ligand>
        <name>Cu cation</name>
        <dbReference type="ChEBI" id="CHEBI:23378"/>
        <label>4</label>
    </ligand>
</feature>
<feature type="binding site" description="type 2 copper site" evidence="1">
    <location>
        <position position="428"/>
    </location>
    <ligand>
        <name>Cu cation</name>
        <dbReference type="ChEBI" id="CHEBI:23378"/>
        <label>1</label>
    </ligand>
</feature>
<feature type="binding site" description="type 3 copper site" evidence="1">
    <location>
        <position position="430"/>
    </location>
    <ligand>
        <name>Cu cation</name>
        <dbReference type="ChEBI" id="CHEBI:23378"/>
        <label>3</label>
    </ligand>
</feature>
<feature type="binding site" description="type 3 copper site" evidence="1">
    <location>
        <position position="481"/>
    </location>
    <ligand>
        <name>Cu cation</name>
        <dbReference type="ChEBI" id="CHEBI:23378"/>
        <label>3</label>
    </ligand>
</feature>
<feature type="binding site" description="type 1 copper site" evidence="1">
    <location>
        <position position="482"/>
    </location>
    <ligand>
        <name>Cu cation</name>
        <dbReference type="ChEBI" id="CHEBI:23378"/>
        <label>4</label>
    </ligand>
</feature>
<feature type="binding site" description="type 3 copper site" evidence="1">
    <location>
        <position position="483"/>
    </location>
    <ligand>
        <name>Cu cation</name>
        <dbReference type="ChEBI" id="CHEBI:23378"/>
        <label>2</label>
    </ligand>
</feature>
<feature type="binding site" description="type 1 copper site" evidence="1">
    <location>
        <position position="487"/>
    </location>
    <ligand>
        <name>Cu cation</name>
        <dbReference type="ChEBI" id="CHEBI:23378"/>
        <label>4</label>
    </ligand>
</feature>
<feature type="glycosylation site" description="N-linked (GlcNAc...) asparagine" evidence="3">
    <location>
        <position position="57"/>
    </location>
</feature>
<feature type="glycosylation site" description="N-linked (GlcNAc...) asparagine" evidence="3">
    <location>
        <position position="239"/>
    </location>
</feature>
<feature type="glycosylation site" description="N-linked (GlcNAc...) asparagine" evidence="3">
    <location>
        <position position="282"/>
    </location>
</feature>
<feature type="disulfide bond" evidence="2">
    <location>
        <begin position="117"/>
        <end position="514"/>
    </location>
</feature>
<feature type="disulfide bond" evidence="1">
    <location>
        <begin position="149"/>
        <end position="236"/>
    </location>
</feature>
<evidence type="ECO:0000250" key="1">
    <source>
        <dbReference type="UniProtKB" id="D0VWU3"/>
    </source>
</evidence>
<evidence type="ECO:0000250" key="2">
    <source>
        <dbReference type="UniProtKB" id="Q70KY3"/>
    </source>
</evidence>
<evidence type="ECO:0000255" key="3"/>
<evidence type="ECO:0000305" key="4"/>
<sequence length="529" mass="56580">MFPGARILATLTLALHLLHGTHAAIGPTGDMYIVNEDVSPDGFTRSAVVARSDPTTNGTSETLTGVLVQGNKGDNFQLNVLNQLSDTTMLKTTSIHWHGFFQSGSTWADGPAFVNQCPIASGNSFLYDFNVPDQAGTFWYHSHLSTQYCDGLRGPFIVYDPSDPHLSLYDVDNADTIITLEDWYHVVAPQNAVLPTADSTLINGKGRFAGGPTSALAVINVESNKRYRFRLISMSCDPNFTFSIDGHSLQVIEADAVNIVPIVVDSIQIFAGQRYSFVLNANQTVDNYWIRADPNLGSTGFDGGINSAILRYAGATEDDPTTTSSTSTPLEETNLVPLENPGAPGPAVPGGADININLAMAFDVTNFELTINGSPFKAPTAPVLLQILSGATTAASLLPSGSIYSLEANKVVEISIPALAVGGPHPFHLHGHTFDVIRSAGSTTYNFDTPARRDVVNTGTDANDNVTIRFVTDNPGPWFLHCHIDWHLEIGLAVVFAEDVTSITAPPAAWDDLCPIYDALSDSDKGGIA</sequence>
<accession>Q12729</accession>
<organism>
    <name type="scientific">Pleurotus ostreatus</name>
    <name type="common">Oyster mushroom</name>
    <name type="synonym">White-rot fungus</name>
    <dbReference type="NCBI Taxonomy" id="5322"/>
    <lineage>
        <taxon>Eukaryota</taxon>
        <taxon>Fungi</taxon>
        <taxon>Dikarya</taxon>
        <taxon>Basidiomycota</taxon>
        <taxon>Agaricomycotina</taxon>
        <taxon>Agaricomycetes</taxon>
        <taxon>Agaricomycetidae</taxon>
        <taxon>Agaricales</taxon>
        <taxon>Pleurotineae</taxon>
        <taxon>Pleurotaceae</taxon>
        <taxon>Pleurotus</taxon>
    </lineage>
</organism>
<gene>
    <name type="primary">POX1</name>
</gene>
<keyword id="KW-0186">Copper</keyword>
<keyword id="KW-1015">Disulfide bond</keyword>
<keyword id="KW-0325">Glycoprotein</keyword>
<keyword id="KW-0439">Lignin degradation</keyword>
<keyword id="KW-0479">Metal-binding</keyword>
<keyword id="KW-0560">Oxidoreductase</keyword>
<keyword id="KW-0677">Repeat</keyword>
<keyword id="KW-0964">Secreted</keyword>
<keyword id="KW-0732">Signal</keyword>
<protein>
    <recommendedName>
        <fullName>Laccase-1</fullName>
        <ecNumber evidence="2">1.10.3.2</ecNumber>
    </recommendedName>
    <alternativeName>
        <fullName>Benzenediol:oxygen oxidoreductase 1</fullName>
    </alternativeName>
    <alternativeName>
        <fullName>Diphenol oxidase 1</fullName>
    </alternativeName>
    <alternativeName>
        <fullName>Urishiol oxidase 1</fullName>
    </alternativeName>
</protein>
<proteinExistence type="evidence at transcript level"/>
<reference key="1">
    <citation type="journal article" date="1995" name="Appl. Environ. Microbiol.">
        <title>Cloning and sequencing of a laccase gene from the lignin-degrading basidiomycete Pleurotus ostreatus.</title>
        <authorList>
            <person name="Giardina P."/>
            <person name="Cannio R."/>
            <person name="Martirani L."/>
            <person name="Marzullo L."/>
            <person name="Palmieri G."/>
            <person name="Sannia G."/>
        </authorList>
    </citation>
    <scope>NUCLEOTIDE SEQUENCE [GENOMIC DNA / MRNA]</scope>
    <source>
        <strain>Florida</strain>
        <tissue>Mycelium</tissue>
    </source>
</reference>
<comment type="function">
    <text evidence="2">Lignin degradation and detoxification of lignin-derived products.</text>
</comment>
<comment type="catalytic activity">
    <reaction evidence="2">
        <text>4 hydroquinone + O2 = 4 benzosemiquinone + 2 H2O</text>
        <dbReference type="Rhea" id="RHEA:11276"/>
        <dbReference type="ChEBI" id="CHEBI:15377"/>
        <dbReference type="ChEBI" id="CHEBI:15379"/>
        <dbReference type="ChEBI" id="CHEBI:17594"/>
        <dbReference type="ChEBI" id="CHEBI:17977"/>
        <dbReference type="EC" id="1.10.3.2"/>
    </reaction>
</comment>
<comment type="cofactor">
    <cofactor evidence="2">
        <name>Cu cation</name>
        <dbReference type="ChEBI" id="CHEBI:23378"/>
    </cofactor>
    <text evidence="2">Binds 4 Cu cations per monomer.</text>
</comment>
<comment type="subcellular location">
    <subcellularLocation>
        <location evidence="2">Secreted</location>
    </subcellularLocation>
</comment>
<comment type="similarity">
    <text evidence="4">Belongs to the multicopper oxidase family.</text>
</comment>
<dbReference type="EC" id="1.10.3.2" evidence="2"/>
<dbReference type="EMBL" id="Z34847">
    <property type="protein sequence ID" value="CAA84356.1"/>
    <property type="molecule type" value="mRNA"/>
</dbReference>
<dbReference type="EMBL" id="Z22591">
    <property type="protein sequence ID" value="CAA80305.1"/>
    <property type="molecule type" value="Genomic_DNA"/>
</dbReference>
<dbReference type="PIR" id="S49120">
    <property type="entry name" value="S49120"/>
</dbReference>
<dbReference type="SMR" id="Q12729"/>
<dbReference type="CAZy" id="AA1">
    <property type="family name" value="Auxiliary Activities 1"/>
</dbReference>
<dbReference type="GlyCosmos" id="Q12729">
    <property type="glycosylation" value="3 sites, No reported glycans"/>
</dbReference>
<dbReference type="VEuPathDB" id="FungiDB:PC9H_006933"/>
<dbReference type="VEuPathDB" id="FungiDB:PLEOSDRAFT_1089733"/>
<dbReference type="GO" id="GO:0005576">
    <property type="term" value="C:extracellular region"/>
    <property type="evidence" value="ECO:0007669"/>
    <property type="project" value="UniProtKB-SubCell"/>
</dbReference>
<dbReference type="GO" id="GO:0005507">
    <property type="term" value="F:copper ion binding"/>
    <property type="evidence" value="ECO:0007669"/>
    <property type="project" value="InterPro"/>
</dbReference>
<dbReference type="GO" id="GO:0052716">
    <property type="term" value="F:hydroquinone:oxygen oxidoreductase activity"/>
    <property type="evidence" value="ECO:0007669"/>
    <property type="project" value="UniProtKB-EC"/>
</dbReference>
<dbReference type="GO" id="GO:0046274">
    <property type="term" value="P:lignin catabolic process"/>
    <property type="evidence" value="ECO:0007669"/>
    <property type="project" value="UniProtKB-KW"/>
</dbReference>
<dbReference type="CDD" id="cd13903">
    <property type="entry name" value="CuRO_3_Tv-LCC_like"/>
    <property type="match status" value="1"/>
</dbReference>
<dbReference type="FunFam" id="2.60.40.420:FF:000045">
    <property type="entry name" value="Laccase 2"/>
    <property type="match status" value="1"/>
</dbReference>
<dbReference type="Gene3D" id="2.60.40.420">
    <property type="entry name" value="Cupredoxins - blue copper proteins"/>
    <property type="match status" value="3"/>
</dbReference>
<dbReference type="InterPro" id="IPR011707">
    <property type="entry name" value="Cu-oxidase-like_N"/>
</dbReference>
<dbReference type="InterPro" id="IPR001117">
    <property type="entry name" value="Cu-oxidase_2nd"/>
</dbReference>
<dbReference type="InterPro" id="IPR011706">
    <property type="entry name" value="Cu-oxidase_C"/>
</dbReference>
<dbReference type="InterPro" id="IPR045087">
    <property type="entry name" value="Cu-oxidase_fam"/>
</dbReference>
<dbReference type="InterPro" id="IPR033138">
    <property type="entry name" value="Cu_oxidase_CS"/>
</dbReference>
<dbReference type="InterPro" id="IPR002355">
    <property type="entry name" value="Cu_oxidase_Cu_BS"/>
</dbReference>
<dbReference type="InterPro" id="IPR008972">
    <property type="entry name" value="Cupredoxin"/>
</dbReference>
<dbReference type="PANTHER" id="PTHR11709:SF511">
    <property type="entry name" value="LACCASE"/>
    <property type="match status" value="1"/>
</dbReference>
<dbReference type="PANTHER" id="PTHR11709">
    <property type="entry name" value="MULTI-COPPER OXIDASE"/>
    <property type="match status" value="1"/>
</dbReference>
<dbReference type="Pfam" id="PF00394">
    <property type="entry name" value="Cu-oxidase"/>
    <property type="match status" value="1"/>
</dbReference>
<dbReference type="Pfam" id="PF07731">
    <property type="entry name" value="Cu-oxidase_2"/>
    <property type="match status" value="1"/>
</dbReference>
<dbReference type="Pfam" id="PF07732">
    <property type="entry name" value="Cu-oxidase_3"/>
    <property type="match status" value="1"/>
</dbReference>
<dbReference type="SUPFAM" id="SSF49503">
    <property type="entry name" value="Cupredoxins"/>
    <property type="match status" value="3"/>
</dbReference>
<dbReference type="PROSITE" id="PS00079">
    <property type="entry name" value="MULTICOPPER_OXIDASE1"/>
    <property type="match status" value="2"/>
</dbReference>
<dbReference type="PROSITE" id="PS00080">
    <property type="entry name" value="MULTICOPPER_OXIDASE2"/>
    <property type="match status" value="1"/>
</dbReference>
<name>LAC1_PLEOS</name>